<accession>Q1CIR9</accession>
<accession>C4GT82</accession>
<evidence type="ECO:0000255" key="1">
    <source>
        <dbReference type="HAMAP-Rule" id="MF_01216"/>
    </source>
</evidence>
<proteinExistence type="inferred from homology"/>
<organism>
    <name type="scientific">Yersinia pestis bv. Antiqua (strain Nepal516)</name>
    <dbReference type="NCBI Taxonomy" id="377628"/>
    <lineage>
        <taxon>Bacteria</taxon>
        <taxon>Pseudomonadati</taxon>
        <taxon>Pseudomonadota</taxon>
        <taxon>Gammaproteobacteria</taxon>
        <taxon>Enterobacterales</taxon>
        <taxon>Yersiniaceae</taxon>
        <taxon>Yersinia</taxon>
    </lineage>
</organism>
<gene>
    <name evidence="1" type="primary">azoR</name>
    <name type="ordered locus">YPN_1782</name>
    <name type="ORF">YP516_1981</name>
</gene>
<reference key="1">
    <citation type="journal article" date="2006" name="J. Bacteriol.">
        <title>Complete genome sequence of Yersinia pestis strains Antiqua and Nepal516: evidence of gene reduction in an emerging pathogen.</title>
        <authorList>
            <person name="Chain P.S.G."/>
            <person name="Hu P."/>
            <person name="Malfatti S.A."/>
            <person name="Radnedge L."/>
            <person name="Larimer F."/>
            <person name="Vergez L.M."/>
            <person name="Worsham P."/>
            <person name="Chu M.C."/>
            <person name="Andersen G.L."/>
        </authorList>
    </citation>
    <scope>NUCLEOTIDE SEQUENCE [LARGE SCALE GENOMIC DNA]</scope>
    <source>
        <strain>Nepal516</strain>
    </source>
</reference>
<reference key="2">
    <citation type="submission" date="2009-04" db="EMBL/GenBank/DDBJ databases">
        <title>Yersinia pestis Nepal516A whole genome shotgun sequencing project.</title>
        <authorList>
            <person name="Plunkett G. III"/>
            <person name="Anderson B.D."/>
            <person name="Baumler D.J."/>
            <person name="Burland V."/>
            <person name="Cabot E.L."/>
            <person name="Glasner J.D."/>
            <person name="Mau B."/>
            <person name="Neeno-Eckwall E."/>
            <person name="Perna N.T."/>
            <person name="Munk A.C."/>
            <person name="Tapia R."/>
            <person name="Green L.D."/>
            <person name="Rogers Y.C."/>
            <person name="Detter J.C."/>
            <person name="Bruce D.C."/>
            <person name="Brettin T.S."/>
        </authorList>
    </citation>
    <scope>NUCLEOTIDE SEQUENCE [LARGE SCALE GENOMIC DNA]</scope>
    <source>
        <strain>Nepal516</strain>
    </source>
</reference>
<protein>
    <recommendedName>
        <fullName evidence="1">FMN-dependent NADH:quinone oxidoreductase</fullName>
        <ecNumber evidence="1">1.6.5.-</ecNumber>
    </recommendedName>
    <alternativeName>
        <fullName evidence="1">Azo-dye reductase</fullName>
    </alternativeName>
    <alternativeName>
        <fullName evidence="1">FMN-dependent NADH-azo compound oxidoreductase</fullName>
    </alternativeName>
    <alternativeName>
        <fullName evidence="1">FMN-dependent NADH-azoreductase</fullName>
        <ecNumber evidence="1">1.7.1.17</ecNumber>
    </alternativeName>
</protein>
<sequence length="201" mass="21600">MSKVLVLKSSILATSSQSNQLADFFVEQWQAAHAGDQITVRDLAAQPIPVLDGELVGALRPSGTALTPRQQEALALSDELIAELQANDVIVIAAPMYNFNIPTQLKNYFDMIARAGVTFRYTEKGPEGLVTGKRAIILTSRGGIHKDTPTDLVVPYLRLFLGFIGITDVEFVFAEGIAYGPEVATKAQADAKTLLAQVVAA</sequence>
<feature type="chain" id="PRO_1000066537" description="FMN-dependent NADH:quinone oxidoreductase">
    <location>
        <begin position="1"/>
        <end position="201"/>
    </location>
</feature>
<feature type="binding site" evidence="1">
    <location>
        <position position="10"/>
    </location>
    <ligand>
        <name>FMN</name>
        <dbReference type="ChEBI" id="CHEBI:58210"/>
    </ligand>
</feature>
<feature type="binding site" evidence="1">
    <location>
        <begin position="16"/>
        <end position="18"/>
    </location>
    <ligand>
        <name>FMN</name>
        <dbReference type="ChEBI" id="CHEBI:58210"/>
    </ligand>
</feature>
<feature type="binding site" evidence="1">
    <location>
        <begin position="96"/>
        <end position="99"/>
    </location>
    <ligand>
        <name>FMN</name>
        <dbReference type="ChEBI" id="CHEBI:58210"/>
    </ligand>
</feature>
<feature type="binding site" evidence="1">
    <location>
        <begin position="140"/>
        <end position="143"/>
    </location>
    <ligand>
        <name>FMN</name>
        <dbReference type="ChEBI" id="CHEBI:58210"/>
    </ligand>
</feature>
<dbReference type="EC" id="1.6.5.-" evidence="1"/>
<dbReference type="EC" id="1.7.1.17" evidence="1"/>
<dbReference type="EMBL" id="CP000305">
    <property type="protein sequence ID" value="ABG18111.1"/>
    <property type="molecule type" value="Genomic_DNA"/>
</dbReference>
<dbReference type="EMBL" id="ACNQ01000010">
    <property type="protein sequence ID" value="EEO76683.1"/>
    <property type="molecule type" value="Genomic_DNA"/>
</dbReference>
<dbReference type="RefSeq" id="WP_002211004.1">
    <property type="nucleotide sequence ID" value="NZ_ACNQ01000010.1"/>
</dbReference>
<dbReference type="SMR" id="Q1CIR9"/>
<dbReference type="GeneID" id="57976351"/>
<dbReference type="KEGG" id="ypn:YPN_1782"/>
<dbReference type="HOGENOM" id="CLU_088964_0_0_6"/>
<dbReference type="Proteomes" id="UP000008936">
    <property type="component" value="Chromosome"/>
</dbReference>
<dbReference type="GO" id="GO:0009055">
    <property type="term" value="F:electron transfer activity"/>
    <property type="evidence" value="ECO:0007669"/>
    <property type="project" value="UniProtKB-UniRule"/>
</dbReference>
<dbReference type="GO" id="GO:0010181">
    <property type="term" value="F:FMN binding"/>
    <property type="evidence" value="ECO:0007669"/>
    <property type="project" value="UniProtKB-UniRule"/>
</dbReference>
<dbReference type="GO" id="GO:0016652">
    <property type="term" value="F:oxidoreductase activity, acting on NAD(P)H as acceptor"/>
    <property type="evidence" value="ECO:0007669"/>
    <property type="project" value="UniProtKB-UniRule"/>
</dbReference>
<dbReference type="GO" id="GO:0016655">
    <property type="term" value="F:oxidoreductase activity, acting on NAD(P)H, quinone or similar compound as acceptor"/>
    <property type="evidence" value="ECO:0007669"/>
    <property type="project" value="InterPro"/>
</dbReference>
<dbReference type="FunFam" id="3.40.50.360:FF:000010">
    <property type="entry name" value="FMN-dependent NADH-azoreductase"/>
    <property type="match status" value="1"/>
</dbReference>
<dbReference type="Gene3D" id="3.40.50.360">
    <property type="match status" value="1"/>
</dbReference>
<dbReference type="HAMAP" id="MF_01216">
    <property type="entry name" value="Azoreductase_type1"/>
    <property type="match status" value="1"/>
</dbReference>
<dbReference type="InterPro" id="IPR003680">
    <property type="entry name" value="Flavodoxin_fold"/>
</dbReference>
<dbReference type="InterPro" id="IPR029039">
    <property type="entry name" value="Flavoprotein-like_sf"/>
</dbReference>
<dbReference type="InterPro" id="IPR050104">
    <property type="entry name" value="FMN-dep_NADH:Q_OxRdtase_AzoR1"/>
</dbReference>
<dbReference type="InterPro" id="IPR023048">
    <property type="entry name" value="NADH:quinone_OxRdtase_FMN_depd"/>
</dbReference>
<dbReference type="PANTHER" id="PTHR43741">
    <property type="entry name" value="FMN-DEPENDENT NADH-AZOREDUCTASE 1"/>
    <property type="match status" value="1"/>
</dbReference>
<dbReference type="PANTHER" id="PTHR43741:SF2">
    <property type="entry name" value="FMN-DEPENDENT NADH:QUINONE OXIDOREDUCTASE"/>
    <property type="match status" value="1"/>
</dbReference>
<dbReference type="Pfam" id="PF02525">
    <property type="entry name" value="Flavodoxin_2"/>
    <property type="match status" value="1"/>
</dbReference>
<dbReference type="SUPFAM" id="SSF52218">
    <property type="entry name" value="Flavoproteins"/>
    <property type="match status" value="1"/>
</dbReference>
<name>AZOR_YERPN</name>
<comment type="function">
    <text evidence="1">Quinone reductase that provides resistance to thiol-specific stress caused by electrophilic quinones.</text>
</comment>
<comment type="function">
    <text evidence="1">Also exhibits azoreductase activity. Catalyzes the reductive cleavage of the azo bond in aromatic azo compounds to the corresponding amines.</text>
</comment>
<comment type="catalytic activity">
    <reaction evidence="1">
        <text>2 a quinone + NADH + H(+) = 2 a 1,4-benzosemiquinone + NAD(+)</text>
        <dbReference type="Rhea" id="RHEA:65952"/>
        <dbReference type="ChEBI" id="CHEBI:15378"/>
        <dbReference type="ChEBI" id="CHEBI:57540"/>
        <dbReference type="ChEBI" id="CHEBI:57945"/>
        <dbReference type="ChEBI" id="CHEBI:132124"/>
        <dbReference type="ChEBI" id="CHEBI:134225"/>
    </reaction>
</comment>
<comment type="catalytic activity">
    <reaction evidence="1">
        <text>N,N-dimethyl-1,4-phenylenediamine + anthranilate + 2 NAD(+) = 2-(4-dimethylaminophenyl)diazenylbenzoate + 2 NADH + 2 H(+)</text>
        <dbReference type="Rhea" id="RHEA:55872"/>
        <dbReference type="ChEBI" id="CHEBI:15378"/>
        <dbReference type="ChEBI" id="CHEBI:15783"/>
        <dbReference type="ChEBI" id="CHEBI:16567"/>
        <dbReference type="ChEBI" id="CHEBI:57540"/>
        <dbReference type="ChEBI" id="CHEBI:57945"/>
        <dbReference type="ChEBI" id="CHEBI:71579"/>
        <dbReference type="EC" id="1.7.1.17"/>
    </reaction>
</comment>
<comment type="cofactor">
    <cofactor evidence="1">
        <name>FMN</name>
        <dbReference type="ChEBI" id="CHEBI:58210"/>
    </cofactor>
    <text evidence="1">Binds 1 FMN per subunit.</text>
</comment>
<comment type="subunit">
    <text evidence="1">Homodimer.</text>
</comment>
<comment type="similarity">
    <text evidence="1">Belongs to the azoreductase type 1 family.</text>
</comment>
<keyword id="KW-0285">Flavoprotein</keyword>
<keyword id="KW-0288">FMN</keyword>
<keyword id="KW-0520">NAD</keyword>
<keyword id="KW-0560">Oxidoreductase</keyword>